<reference key="1">
    <citation type="journal article" date="2009" name="J. Biol. Chem.">
        <title>Curcuminoid biosynthesis by two type III polyketide synthases in the herb Curcuma longa.</title>
        <authorList>
            <person name="Katsuyama Y."/>
            <person name="Kita T."/>
            <person name="Funa N."/>
            <person name="Horinouchi S."/>
        </authorList>
    </citation>
    <scope>NUCLEOTIDE SEQUENCE [MRNA]</scope>
    <scope>FUNCTION</scope>
    <scope>CATALYTIC ACTIVITY</scope>
    <scope>BIOPHYSICOCHEMICAL PROPERTIES</scope>
    <scope>PATHWAY</scope>
    <scope>TISSUE SPECIFICITY</scope>
</reference>
<reference key="2">
    <citation type="journal article" date="2011" name="J. Biol. Chem.">
        <title>Structural and biochemical elucidation of mechanism for decarboxylative condensation of beta-keto acid by curcumin synthase.</title>
        <authorList>
            <person name="Katsuyama Y."/>
            <person name="Miyazono K."/>
            <person name="Tanokura M."/>
            <person name="Ohnishi Y."/>
            <person name="Horinouchi S."/>
        </authorList>
    </citation>
    <scope>X-RAY CRYSTALLOGRAPHY (2.50 ANGSTROMS) OF MUTANT GLY-211</scope>
    <scope>FUNCTION</scope>
    <scope>CATALYTIC ACTIVITY</scope>
    <scope>SUBUNIT</scope>
    <scope>MUTAGENESIS OF GLY-211 AND HIS-303</scope>
</reference>
<comment type="function">
    <text evidence="2 3">Catalyzes the synthesis of curcumin by condensing feruloyl-CoA with a diketide-CoA in the curcuminoid biosynthesis.</text>
</comment>
<comment type="catalytic activity">
    <reaction evidence="2 3">
        <text>(E)-feruloylacetyl-CoA + (E)-feruloyl-CoA + H2O = curcumin + CO2 + 2 CoA</text>
        <dbReference type="Rhea" id="RHEA:34823"/>
        <dbReference type="ChEBI" id="CHEBI:3962"/>
        <dbReference type="ChEBI" id="CHEBI:15377"/>
        <dbReference type="ChEBI" id="CHEBI:16526"/>
        <dbReference type="ChEBI" id="CHEBI:57287"/>
        <dbReference type="ChEBI" id="CHEBI:87305"/>
        <dbReference type="ChEBI" id="CHEBI:142389"/>
        <dbReference type="EC" id="2.3.1.217"/>
    </reaction>
</comment>
<comment type="biophysicochemical properties">
    <kinetics>
        <KM evidence="2">18 uM for feruloyl-CoA</KM>
        <KM evidence="2">189 uM for p-coumaroyl-CoA</KM>
        <text>kcat is 1.1 min(-1) with feruloyl-CoA. kcat is 0.85 min(-1) with p-coumaroyl-CoA.</text>
    </kinetics>
    <phDependence>
        <text evidence="2">Optimum pH is 9.0.</text>
    </phDependence>
    <temperatureDependence>
        <text evidence="2">Optimum temperature is 50 degrees Celsius.</text>
    </temperatureDependence>
</comment>
<comment type="pathway">
    <text evidence="2">Secondary metabolite biosynthesis; flavonoid biosynthesis.</text>
</comment>
<comment type="subunit">
    <text evidence="3">Homodimer.</text>
</comment>
<comment type="tissue specificity">
    <text evidence="2">Expressed in both the leaf and rhizome, with higher expression in the rhizome.</text>
</comment>
<comment type="similarity">
    <text evidence="4">Belongs to the thiolase-like superfamily. Chalcone/stilbene synthases family.</text>
</comment>
<keyword id="KW-0002">3D-structure</keyword>
<keyword id="KW-0012">Acyltransferase</keyword>
<keyword id="KW-0284">Flavonoid biosynthesis</keyword>
<keyword id="KW-0808">Transferase</keyword>
<evidence type="ECO:0000250" key="1"/>
<evidence type="ECO:0000269" key="2">
    <source>
    </source>
</evidence>
<evidence type="ECO:0000269" key="3">
    <source>
    </source>
</evidence>
<evidence type="ECO:0000305" key="4"/>
<evidence type="ECO:0007829" key="5">
    <source>
        <dbReference type="PDB" id="3OV2"/>
    </source>
</evidence>
<feature type="chain" id="PRO_0000422571" description="Curcumin synthase 1">
    <location>
        <begin position="1"/>
        <end position="389"/>
    </location>
</feature>
<feature type="active site" evidence="1">
    <location>
        <position position="164"/>
    </location>
</feature>
<feature type="mutagenesis site" description="Strong reduction in enzyme activity." evidence="3">
    <original>G</original>
    <variation>F</variation>
    <variation>W</variation>
    <location>
        <position position="211"/>
    </location>
</feature>
<feature type="mutagenesis site" description="Strong reduction in enzyme activity." evidence="3">
    <original>H</original>
    <variation>A</variation>
    <variation>Q</variation>
    <location>
        <position position="303"/>
    </location>
</feature>
<feature type="helix" evidence="5">
    <location>
        <begin position="4"/>
        <end position="11"/>
    </location>
</feature>
<feature type="strand" evidence="5">
    <location>
        <begin position="18"/>
        <end position="25"/>
    </location>
</feature>
<feature type="strand" evidence="5">
    <location>
        <begin position="30"/>
        <end position="32"/>
    </location>
</feature>
<feature type="helix" evidence="5">
    <location>
        <begin position="33"/>
        <end position="35"/>
    </location>
</feature>
<feature type="helix" evidence="5">
    <location>
        <begin position="36"/>
        <end position="43"/>
    </location>
</feature>
<feature type="helix" evidence="5">
    <location>
        <begin position="50"/>
        <end position="62"/>
    </location>
</feature>
<feature type="strand" evidence="5">
    <location>
        <begin position="67"/>
        <end position="69"/>
    </location>
</feature>
<feature type="helix" evidence="5">
    <location>
        <begin position="74"/>
        <end position="79"/>
    </location>
</feature>
<feature type="helix" evidence="5">
    <location>
        <begin position="81"/>
        <end position="84"/>
    </location>
</feature>
<feature type="strand" evidence="5">
    <location>
        <begin position="85"/>
        <end position="88"/>
    </location>
</feature>
<feature type="helix" evidence="5">
    <location>
        <begin position="91"/>
        <end position="117"/>
    </location>
</feature>
<feature type="helix" evidence="5">
    <location>
        <begin position="121"/>
        <end position="123"/>
    </location>
</feature>
<feature type="strand" evidence="5">
    <location>
        <begin position="126"/>
        <end position="133"/>
    </location>
</feature>
<feature type="helix" evidence="5">
    <location>
        <begin position="140"/>
        <end position="148"/>
    </location>
</feature>
<feature type="strand" evidence="5">
    <location>
        <begin position="154"/>
        <end position="161"/>
    </location>
</feature>
<feature type="helix" evidence="5">
    <location>
        <begin position="166"/>
        <end position="180"/>
    </location>
</feature>
<feature type="strand" evidence="5">
    <location>
        <begin position="185"/>
        <end position="192"/>
    </location>
</feature>
<feature type="helix" evidence="5">
    <location>
        <begin position="194"/>
        <end position="196"/>
    </location>
</feature>
<feature type="helix" evidence="5">
    <location>
        <begin position="206"/>
        <end position="214"/>
    </location>
</feature>
<feature type="strand" evidence="5">
    <location>
        <begin position="218"/>
        <end position="227"/>
    </location>
</feature>
<feature type="turn" evidence="5">
    <location>
        <begin position="230"/>
        <end position="232"/>
    </location>
</feature>
<feature type="strand" evidence="5">
    <location>
        <begin position="236"/>
        <end position="246"/>
    </location>
</feature>
<feature type="strand" evidence="5">
    <location>
        <begin position="253"/>
        <end position="259"/>
    </location>
</feature>
<feature type="strand" evidence="5">
    <location>
        <begin position="262"/>
        <end position="267"/>
    </location>
</feature>
<feature type="helix" evidence="5">
    <location>
        <begin position="271"/>
        <end position="276"/>
    </location>
</feature>
<feature type="helix" evidence="5">
    <location>
        <begin position="280"/>
        <end position="287"/>
    </location>
</feature>
<feature type="helix" evidence="5">
    <location>
        <begin position="288"/>
        <end position="290"/>
    </location>
</feature>
<feature type="helix" evidence="5">
    <location>
        <begin position="295"/>
        <end position="297"/>
    </location>
</feature>
<feature type="strand" evidence="5">
    <location>
        <begin position="298"/>
        <end position="302"/>
    </location>
</feature>
<feature type="helix" evidence="5">
    <location>
        <begin position="307"/>
        <end position="317"/>
    </location>
</feature>
<feature type="turn" evidence="5">
    <location>
        <begin position="321"/>
        <end position="324"/>
    </location>
</feature>
<feature type="helix" evidence="5">
    <location>
        <begin position="325"/>
        <end position="334"/>
    </location>
</feature>
<feature type="helix" evidence="5">
    <location>
        <begin position="338"/>
        <end position="340"/>
    </location>
</feature>
<feature type="helix" evidence="5">
    <location>
        <begin position="341"/>
        <end position="355"/>
    </location>
</feature>
<feature type="turn" evidence="5">
    <location>
        <begin position="361"/>
        <end position="364"/>
    </location>
</feature>
<feature type="strand" evidence="5">
    <location>
        <begin position="366"/>
        <end position="374"/>
    </location>
</feature>
<feature type="turn" evidence="5">
    <location>
        <begin position="375"/>
        <end position="377"/>
    </location>
</feature>
<feature type="strand" evidence="5">
    <location>
        <begin position="378"/>
        <end position="386"/>
    </location>
</feature>
<protein>
    <recommendedName>
        <fullName>Curcumin synthase 1</fullName>
        <ecNumber>2.3.1.217</ecNumber>
    </recommendedName>
</protein>
<organism>
    <name type="scientific">Curcuma longa</name>
    <name type="common">Turmeric</name>
    <name type="synonym">Curcuma domestica</name>
    <dbReference type="NCBI Taxonomy" id="136217"/>
    <lineage>
        <taxon>Eukaryota</taxon>
        <taxon>Viridiplantae</taxon>
        <taxon>Streptophyta</taxon>
        <taxon>Embryophyta</taxon>
        <taxon>Tracheophyta</taxon>
        <taxon>Spermatophyta</taxon>
        <taxon>Magnoliopsida</taxon>
        <taxon>Liliopsida</taxon>
        <taxon>Zingiberales</taxon>
        <taxon>Zingiberaceae</taxon>
        <taxon>Curcuma</taxon>
    </lineage>
</organism>
<sequence>MANLHALRREQRAQGPATIMAIGTATPPNLYEQSTFPDFYFRVTNSDDKQELKKKFRRMCEKTMVKKRYLHLTEEILKERPKLCSYKEASFDDRQDIVVEEIPRLAKEAAEKAIKEWGRPKSEITHLVFCSISGIDMPGADYRLATLLGLPLTVNRLMIYSQACHMGAAMLRIAKDLAENNRGARVLVVACEITVLSFRGPNEGDFEALAGQAGFGDGAGAVVVGADPLEGIEKPIYEIAAAMQETVAESQGAVGGHLRAFGWTFYFLNQLPAIIADNLGRSLERALAPLGVREWNDVFWVAHPGNWAIIDAIEAKLQLSPDKLSTARHVFTEYGNMQSATVYFVMDELRKRSAVEGRSTTGDGLQWGVLLGFGPGLSIETVVLRSMPL</sequence>
<dbReference type="EC" id="2.3.1.217"/>
<dbReference type="EMBL" id="AB495007">
    <property type="protein sequence ID" value="BAH56226.1"/>
    <property type="molecule type" value="mRNA"/>
</dbReference>
<dbReference type="PDB" id="3OV2">
    <property type="method" value="X-ray"/>
    <property type="resolution" value="2.32 A"/>
    <property type="chains" value="A/B/C/D=1-389"/>
</dbReference>
<dbReference type="PDB" id="3OV3">
    <property type="method" value="X-ray"/>
    <property type="resolution" value="2.50 A"/>
    <property type="chains" value="A/B/C/D=1-389"/>
</dbReference>
<dbReference type="PDBsum" id="3OV2"/>
<dbReference type="PDBsum" id="3OV3"/>
<dbReference type="SMR" id="C0SVZ6"/>
<dbReference type="KEGG" id="ag:BAH56226"/>
<dbReference type="BioCyc" id="MetaCyc:MONOMER-15409"/>
<dbReference type="BRENDA" id="2.3.1.217">
    <property type="organism ID" value="9125"/>
</dbReference>
<dbReference type="BRENDA" id="2.3.1.219">
    <property type="organism ID" value="9125"/>
</dbReference>
<dbReference type="UniPathway" id="UPA00154"/>
<dbReference type="EvolutionaryTrace" id="C0SVZ6"/>
<dbReference type="GO" id="GO:0016747">
    <property type="term" value="F:acyltransferase activity, transferring groups other than amino-acyl groups"/>
    <property type="evidence" value="ECO:0000314"/>
    <property type="project" value="UniProtKB"/>
</dbReference>
<dbReference type="GO" id="GO:0102106">
    <property type="term" value="F:curcumin synthase activity"/>
    <property type="evidence" value="ECO:0007669"/>
    <property type="project" value="UniProtKB-EC"/>
</dbReference>
<dbReference type="GO" id="GO:0009813">
    <property type="term" value="P:flavonoid biosynthetic process"/>
    <property type="evidence" value="ECO:0000314"/>
    <property type="project" value="UniProtKB"/>
</dbReference>
<dbReference type="GO" id="GO:0030639">
    <property type="term" value="P:polyketide biosynthetic process"/>
    <property type="evidence" value="ECO:0007669"/>
    <property type="project" value="TreeGrafter"/>
</dbReference>
<dbReference type="CDD" id="cd00831">
    <property type="entry name" value="CHS_like"/>
    <property type="match status" value="1"/>
</dbReference>
<dbReference type="FunFam" id="3.40.47.10:FF:000014">
    <property type="entry name" value="Chalcone synthase 1"/>
    <property type="match status" value="1"/>
</dbReference>
<dbReference type="FunFam" id="3.40.47.10:FF:000025">
    <property type="entry name" value="Chalcone synthase 2"/>
    <property type="match status" value="1"/>
</dbReference>
<dbReference type="Gene3D" id="3.40.47.10">
    <property type="match status" value="2"/>
</dbReference>
<dbReference type="InterPro" id="IPR012328">
    <property type="entry name" value="Chalcone/stilbene_synt_C"/>
</dbReference>
<dbReference type="InterPro" id="IPR001099">
    <property type="entry name" value="Chalcone/stilbene_synt_N"/>
</dbReference>
<dbReference type="InterPro" id="IPR011141">
    <property type="entry name" value="Polyketide_synthase_type-III"/>
</dbReference>
<dbReference type="InterPro" id="IPR016039">
    <property type="entry name" value="Thiolase-like"/>
</dbReference>
<dbReference type="PANTHER" id="PTHR11877:SF105">
    <property type="entry name" value="CHALCONE SYNTHASE"/>
    <property type="match status" value="1"/>
</dbReference>
<dbReference type="PANTHER" id="PTHR11877">
    <property type="entry name" value="HYDROXYMETHYLGLUTARYL-COA SYNTHASE"/>
    <property type="match status" value="1"/>
</dbReference>
<dbReference type="Pfam" id="PF02797">
    <property type="entry name" value="Chal_sti_synt_C"/>
    <property type="match status" value="1"/>
</dbReference>
<dbReference type="Pfam" id="PF00195">
    <property type="entry name" value="Chal_sti_synt_N"/>
    <property type="match status" value="1"/>
</dbReference>
<dbReference type="PIRSF" id="PIRSF000451">
    <property type="entry name" value="PKS_III"/>
    <property type="match status" value="1"/>
</dbReference>
<dbReference type="SUPFAM" id="SSF53901">
    <property type="entry name" value="Thiolase-like"/>
    <property type="match status" value="2"/>
</dbReference>
<name>CURS1_CURLO</name>
<gene>
    <name type="primary">CURS1</name>
</gene>
<accession>C0SVZ6</accession>
<proteinExistence type="evidence at protein level"/>